<sequence>MFGVLNSNDHRAAVQQRNTPAFGRTSFELWTDNPTSNYRCETGGNGRDSGQNRVRRPMNAFMVWSRDQRRRVALENPQMQNSEISKQLGYQWKMLTEAEKWPFFEEAQRLQAMHREKYPDYKYRPRRKALPQKRDKLLPAASSSMLRRQVLVDEKWYPFTYRDSCSTAAHSRMEDQLSSSQPVNIANSLLQQEHHYSSTSFRDSPETLATHLSADPPFYPK</sequence>
<evidence type="ECO:0000250" key="1">
    <source>
        <dbReference type="UniProtKB" id="P36394"/>
    </source>
</evidence>
<evidence type="ECO:0000250" key="2">
    <source>
        <dbReference type="UniProtKB" id="Q05066"/>
    </source>
</evidence>
<evidence type="ECO:0000255" key="3">
    <source>
        <dbReference type="PROSITE-ProRule" id="PRU00267"/>
    </source>
</evidence>
<evidence type="ECO:0000256" key="4">
    <source>
        <dbReference type="SAM" id="MobiDB-lite"/>
    </source>
</evidence>
<evidence type="ECO:0000305" key="5"/>
<protein>
    <recommendedName>
        <fullName>Sex-determining region Y protein</fullName>
    </recommendedName>
    <alternativeName>
        <fullName>Testis-determining factor</fullName>
    </alternativeName>
</protein>
<dbReference type="EMBL" id="AY424665">
    <property type="protein sequence ID" value="AAR10376.1"/>
    <property type="molecule type" value="Genomic_DNA"/>
</dbReference>
<dbReference type="SMR" id="Q6TC30"/>
<dbReference type="GO" id="GO:0005737">
    <property type="term" value="C:cytoplasm"/>
    <property type="evidence" value="ECO:0007669"/>
    <property type="project" value="UniProtKB-SubCell"/>
</dbReference>
<dbReference type="GO" id="GO:0016607">
    <property type="term" value="C:nuclear speck"/>
    <property type="evidence" value="ECO:0007669"/>
    <property type="project" value="UniProtKB-SubCell"/>
</dbReference>
<dbReference type="GO" id="GO:0005634">
    <property type="term" value="C:nucleus"/>
    <property type="evidence" value="ECO:0000250"/>
    <property type="project" value="UniProtKB"/>
</dbReference>
<dbReference type="GO" id="GO:0005516">
    <property type="term" value="F:calmodulin binding"/>
    <property type="evidence" value="ECO:0007669"/>
    <property type="project" value="UniProtKB-KW"/>
</dbReference>
<dbReference type="GO" id="GO:0001228">
    <property type="term" value="F:DNA-binding transcription activator activity, RNA polymerase II-specific"/>
    <property type="evidence" value="ECO:0007669"/>
    <property type="project" value="TreeGrafter"/>
</dbReference>
<dbReference type="GO" id="GO:0000978">
    <property type="term" value="F:RNA polymerase II cis-regulatory region sequence-specific DNA binding"/>
    <property type="evidence" value="ECO:0007669"/>
    <property type="project" value="TreeGrafter"/>
</dbReference>
<dbReference type="GO" id="GO:0030154">
    <property type="term" value="P:cell differentiation"/>
    <property type="evidence" value="ECO:0007669"/>
    <property type="project" value="UniProtKB-KW"/>
</dbReference>
<dbReference type="GO" id="GO:0030238">
    <property type="term" value="P:male sex determination"/>
    <property type="evidence" value="ECO:0007669"/>
    <property type="project" value="InterPro"/>
</dbReference>
<dbReference type="GO" id="GO:0007548">
    <property type="term" value="P:sex differentiation"/>
    <property type="evidence" value="ECO:0007669"/>
    <property type="project" value="UniProtKB-KW"/>
</dbReference>
<dbReference type="CDD" id="cd22034">
    <property type="entry name" value="HMG-box_SoxA_SRY"/>
    <property type="match status" value="1"/>
</dbReference>
<dbReference type="FunFam" id="1.10.30.10:FF:000002">
    <property type="entry name" value="transcription factor Sox-2"/>
    <property type="match status" value="1"/>
</dbReference>
<dbReference type="Gene3D" id="1.10.30.10">
    <property type="entry name" value="High mobility group box domain"/>
    <property type="match status" value="1"/>
</dbReference>
<dbReference type="InterPro" id="IPR009071">
    <property type="entry name" value="HMG_box_dom"/>
</dbReference>
<dbReference type="InterPro" id="IPR036910">
    <property type="entry name" value="HMG_box_dom_sf"/>
</dbReference>
<dbReference type="InterPro" id="IPR017253">
    <property type="entry name" value="SRY"/>
</dbReference>
<dbReference type="InterPro" id="IPR050140">
    <property type="entry name" value="SRY-related_HMG-box_TF-like"/>
</dbReference>
<dbReference type="PANTHER" id="PTHR10270:SF161">
    <property type="entry name" value="SEX-DETERMINING REGION Y PROTEIN"/>
    <property type="match status" value="1"/>
</dbReference>
<dbReference type="PANTHER" id="PTHR10270">
    <property type="entry name" value="SOX TRANSCRIPTION FACTOR"/>
    <property type="match status" value="1"/>
</dbReference>
<dbReference type="Pfam" id="PF00505">
    <property type="entry name" value="HMG_box"/>
    <property type="match status" value="1"/>
</dbReference>
<dbReference type="PIRSF" id="PIRSF037653">
    <property type="entry name" value="SRY"/>
    <property type="match status" value="1"/>
</dbReference>
<dbReference type="SMART" id="SM00398">
    <property type="entry name" value="HMG"/>
    <property type="match status" value="1"/>
</dbReference>
<dbReference type="SUPFAM" id="SSF47095">
    <property type="entry name" value="HMG-box"/>
    <property type="match status" value="1"/>
</dbReference>
<dbReference type="PROSITE" id="PS50118">
    <property type="entry name" value="HMG_BOX_2"/>
    <property type="match status" value="1"/>
</dbReference>
<feature type="chain" id="PRO_0000048662" description="Sex-determining region Y protein">
    <location>
        <begin position="1"/>
        <end position="221"/>
    </location>
</feature>
<feature type="DNA-binding region" description="HMG box" evidence="3">
    <location>
        <begin position="54"/>
        <end position="122"/>
    </location>
</feature>
<feature type="region of interest" description="Disordered" evidence="4">
    <location>
        <begin position="194"/>
        <end position="221"/>
    </location>
</feature>
<accession>Q6TC30</accession>
<gene>
    <name type="primary">SRY</name>
    <name type="synonym">TDF</name>
</gene>
<keyword id="KW-0010">Activator</keyword>
<keyword id="KW-0112">Calmodulin-binding</keyword>
<keyword id="KW-0963">Cytoplasm</keyword>
<keyword id="KW-0221">Differentiation</keyword>
<keyword id="KW-0238">DNA-binding</keyword>
<keyword id="KW-0539">Nucleus</keyword>
<keyword id="KW-0726">Sexual differentiation</keyword>
<keyword id="KW-0804">Transcription</keyword>
<keyword id="KW-0805">Transcription regulation</keyword>
<reference key="1">
    <citation type="submission" date="2003-09" db="EMBL/GenBank/DDBJ databases">
        <title>A phylogeny of the pinnipeds from mitochondrial and single copy nuclear gene sequences.</title>
        <authorList>
            <person name="Kinnear M.W."/>
            <person name="Walker G."/>
            <person name="Amos W."/>
        </authorList>
    </citation>
    <scope>NUCLEOTIDE SEQUENCE [GENOMIC DNA]</scope>
</reference>
<comment type="function">
    <text evidence="1 2">Transcriptional regulator that controls a genetic switch in male development. It is necessary and sufficient for initiating male sex determination by directing the development of supporting cell precursors (pre-Sertoli cells) as Sertoli rather than granulosa cells. Involved in different aspects of gene regulation including promoter activation or repression. Binds to the DNA consensus sequence 5'-[AT]AACAA[AT]-3'. SRY HMG box recognizes DNA by partial intercalation in the minor groove and promotes DNA bending. Also involved in pre-mRNA splicing (By similarity). In male adult brain involved in the maintenance of motor functions of dopaminergic neurons (By similarity).</text>
</comment>
<comment type="subunit">
    <text evidence="2">Interacts with CALM, EP300, HDAC3, KPNB1, ZNF208 isoform KRAB-O, PARP1, SLC9A3R2 and WT1. The interaction with EP300 modulates its DNA-binding activity. The interaction with KPNB1 is sensitive to dissociation by Ran in the GTP-bound form. Interaction with PARP1 impaired its DNA-binding activity.</text>
</comment>
<comment type="subcellular location">
    <subcellularLocation>
        <location evidence="2">Nucleus speckle</location>
    </subcellularLocation>
    <subcellularLocation>
        <location evidence="2">Cytoplasm</location>
    </subcellularLocation>
    <subcellularLocation>
        <location evidence="2">Nucleus</location>
    </subcellularLocation>
</comment>
<comment type="similarity">
    <text evidence="5">Belongs to the SRY family.</text>
</comment>
<comment type="online information" name="Protein Spotlight">
    <link uri="https://www.proteinspotlight.org/back_issues/080"/>
    <text>The tenuous nature of sex - Issue 80 of March 2007</text>
</comment>
<proteinExistence type="inferred from homology"/>
<name>SRY_ERIBA</name>
<organism>
    <name type="scientific">Erignathus barbatus</name>
    <name type="common">Bearded seal</name>
    <dbReference type="NCBI Taxonomy" id="39304"/>
    <lineage>
        <taxon>Eukaryota</taxon>
        <taxon>Metazoa</taxon>
        <taxon>Chordata</taxon>
        <taxon>Craniata</taxon>
        <taxon>Vertebrata</taxon>
        <taxon>Euteleostomi</taxon>
        <taxon>Mammalia</taxon>
        <taxon>Eutheria</taxon>
        <taxon>Laurasiatheria</taxon>
        <taxon>Carnivora</taxon>
        <taxon>Caniformia</taxon>
        <taxon>Pinnipedia</taxon>
        <taxon>Phocidae</taxon>
        <taxon>Phocinae</taxon>
        <taxon>Erignathus</taxon>
    </lineage>
</organism>